<comment type="function">
    <text evidence="1">APOE is an apolipoprotein, a protein associating with lipid particles, that mainly functions in lipoprotein-mediated lipid transport between organs via the plasma and interstitial fluids. APOE is a core component of plasma lipoproteins and is involved in their production, conversion and clearance. Apolipoproteins are amphipathic molecules that interact both with lipids of the lipoprotein particle core and the aqueous environment of the plasma. As such, APOE associates with chylomicrons, chylomicron remnants, very low density lipoproteins (VLDL) and intermediate density lipoproteins (IDL) but shows a preferential binding to high-density lipoproteins (HDL). It also binds a wide range of cellular receptors including the LDL receptor/LDLR, the LDL receptor-related proteins LRP1, LRP2 and LRP8 and the very low-density lipoprotein receptor/VLDLR that mediate the cellular uptake of the APOE-containing lipoprotein particles. Finally, APOE also has a heparin-binding activity and binds heparan-sulfate proteoglycans on the surface of cells, a property that supports the capture and the receptor-mediated uptake of APOE-containing lipoproteins by cells. A main function of APOE is to mediate lipoprotein clearance through the uptake of chylomicrons, VLDLs, and HDLs by hepatocytes. APOE is also involved in the biosynthesis by the liver of VLDLs as well as their uptake by peripheral tissues ensuring the delivery of triglycerides and energy storage in muscle, heart and adipose tissues. By participating in the lipoprotein-mediated distribution of lipids among tissues, APOE plays a critical role in plasma and tissues lipid homeostasis. APOE is also involved in two steps of reverse cholesterol transport, the HDLs-mediated transport of cholesterol from peripheral tissues to the liver, and thereby plays an important role in cholesterol homeostasis. First, it is functionally associated with ABCA1 in the biogenesis of HDLs in tissues. Second, it is enriched in circulating HDLs and mediates their uptake by hepatocytes. APOE also plays an important role in lipid transport in the central nervous system, regulating neuron survival and sprouting.</text>
</comment>
<comment type="subunit">
    <text evidence="1">Homotetramer. May interact with ABCA1; functionally associated with ABCA1 in the biogenesis of HDLs. May interact with APP/A4 amyloid-beta peptide; the interaction is extremely stable in vitro but its physiological significance is unclear. May interact with MAPT. May interact with MAP2. In the cerebrospinal fluid, interacts with secreted SORL1. Interacts with PMEL; this allows the loading of PMEL luminal fragment on ILVs to induce fibril nucleation.</text>
</comment>
<comment type="subcellular location">
    <subcellularLocation>
        <location evidence="1">Secreted</location>
    </subcellularLocation>
    <subcellularLocation>
        <location evidence="1">Secreted</location>
        <location evidence="1">Extracellular space</location>
    </subcellularLocation>
    <subcellularLocation>
        <location evidence="1">Secreted</location>
        <location evidence="1">Extracellular space</location>
        <location evidence="1">Extracellular matrix</location>
    </subcellularLocation>
    <subcellularLocation>
        <location evidence="1">Extracellular vesicle</location>
    </subcellularLocation>
    <subcellularLocation>
        <location evidence="1">Endosome</location>
        <location evidence="1">Multivesicular body</location>
    </subcellularLocation>
    <text evidence="1">In the plasma, APOE is associated with chylomicrons, chylomicrons remnants, VLDL, LDL and HDL lipoproteins. Lipid poor oligomeric APOE is associated with the extracellular matrix in a calcium- and heparan-sulfate proteoglycans-dependent manner. Lipidation induces the release from the extracellular matrix. Colocalizes with CD63 and PMEL at exosomes and in intraluminal vesicles within multivesicular endosomes.</text>
</comment>
<comment type="PTM">
    <text evidence="1">APOE exists as multiple glycosylated and sialylated glycoforms within cells and in plasma. The extent of glycosylation and sialylation are tissue and context specific.</text>
</comment>
<comment type="PTM">
    <text evidence="1">Glycated in plasma VLDL.</text>
</comment>
<comment type="PTM">
    <text evidence="1">Phosphorylated by FAM20C in the extracellular medium.</text>
</comment>
<comment type="similarity">
    <text evidence="4">Belongs to the apolipoprotein A1/A4/E family.</text>
</comment>
<protein>
    <recommendedName>
        <fullName>Apolipoprotein E</fullName>
        <shortName>Apo-E</shortName>
    </recommendedName>
</protein>
<accession>P0DKW7</accession>
<keyword id="KW-0162">Chylomicron</keyword>
<keyword id="KW-0967">Endosome</keyword>
<keyword id="KW-0272">Extracellular matrix</keyword>
<keyword id="KW-0325">Glycoprotein</keyword>
<keyword id="KW-0345">HDL</keyword>
<keyword id="KW-0358">Heparin-binding</keyword>
<keyword id="KW-0445">Lipid transport</keyword>
<keyword id="KW-0446">Lipid-binding</keyword>
<keyword id="KW-0558">Oxidation</keyword>
<keyword id="KW-0597">Phosphoprotein</keyword>
<keyword id="KW-0677">Repeat</keyword>
<keyword id="KW-0964">Secreted</keyword>
<keyword id="KW-0732">Signal</keyword>
<keyword id="KW-0813">Transport</keyword>
<keyword id="KW-0850">VLDL</keyword>
<evidence type="ECO:0000250" key="1">
    <source>
        <dbReference type="UniProtKB" id="P02649"/>
    </source>
</evidence>
<evidence type="ECO:0000250" key="2">
    <source>
        <dbReference type="UniProtKB" id="P08226"/>
    </source>
</evidence>
<evidence type="ECO:0000255" key="3"/>
<evidence type="ECO:0000305" key="4"/>
<dbReference type="EMBL" id="AC146285">
    <property type="status" value="NOT_ANNOTATED_CDS"/>
    <property type="molecule type" value="Genomic_DNA"/>
</dbReference>
<dbReference type="SMR" id="P0DKW7"/>
<dbReference type="GO" id="GO:0042627">
    <property type="term" value="C:chylomicron"/>
    <property type="evidence" value="ECO:0007669"/>
    <property type="project" value="UniProtKB-KW"/>
</dbReference>
<dbReference type="GO" id="GO:0070062">
    <property type="term" value="C:extracellular exosome"/>
    <property type="evidence" value="ECO:0000250"/>
    <property type="project" value="UniProtKB"/>
</dbReference>
<dbReference type="GO" id="GO:0031012">
    <property type="term" value="C:extracellular matrix"/>
    <property type="evidence" value="ECO:0000250"/>
    <property type="project" value="UniProtKB"/>
</dbReference>
<dbReference type="GO" id="GO:0005615">
    <property type="term" value="C:extracellular space"/>
    <property type="evidence" value="ECO:0000250"/>
    <property type="project" value="UniProtKB"/>
</dbReference>
<dbReference type="GO" id="GO:0034364">
    <property type="term" value="C:high-density lipoprotein particle"/>
    <property type="evidence" value="ECO:0000250"/>
    <property type="project" value="UniProtKB"/>
</dbReference>
<dbReference type="GO" id="GO:0034363">
    <property type="term" value="C:intermediate-density lipoprotein particle"/>
    <property type="evidence" value="ECO:0000250"/>
    <property type="project" value="UniProtKB"/>
</dbReference>
<dbReference type="GO" id="GO:0034362">
    <property type="term" value="C:low-density lipoprotein particle"/>
    <property type="evidence" value="ECO:0000250"/>
    <property type="project" value="UniProtKB"/>
</dbReference>
<dbReference type="GO" id="GO:0097487">
    <property type="term" value="C:multivesicular body, internal vesicle"/>
    <property type="evidence" value="ECO:0000250"/>
    <property type="project" value="UniProtKB"/>
</dbReference>
<dbReference type="GO" id="GO:0034361">
    <property type="term" value="C:very-low-density lipoprotein particle"/>
    <property type="evidence" value="ECO:0000250"/>
    <property type="project" value="UniProtKB"/>
</dbReference>
<dbReference type="GO" id="GO:0120020">
    <property type="term" value="F:cholesterol transfer activity"/>
    <property type="evidence" value="ECO:0007669"/>
    <property type="project" value="TreeGrafter"/>
</dbReference>
<dbReference type="GO" id="GO:0043395">
    <property type="term" value="F:heparan sulfate proteoglycan binding"/>
    <property type="evidence" value="ECO:0000250"/>
    <property type="project" value="UniProtKB"/>
</dbReference>
<dbReference type="GO" id="GO:0008201">
    <property type="term" value="F:heparin binding"/>
    <property type="evidence" value="ECO:0000250"/>
    <property type="project" value="UniProtKB"/>
</dbReference>
<dbReference type="GO" id="GO:0042802">
    <property type="term" value="F:identical protein binding"/>
    <property type="evidence" value="ECO:0000250"/>
    <property type="project" value="UniProtKB"/>
</dbReference>
<dbReference type="GO" id="GO:0050750">
    <property type="term" value="F:low-density lipoprotein particle receptor binding"/>
    <property type="evidence" value="ECO:0000250"/>
    <property type="project" value="UniProtKB"/>
</dbReference>
<dbReference type="GO" id="GO:0060228">
    <property type="term" value="F:phosphatidylcholine-sterol O-acyltransferase activator activity"/>
    <property type="evidence" value="ECO:0007669"/>
    <property type="project" value="TreeGrafter"/>
</dbReference>
<dbReference type="GO" id="GO:0005543">
    <property type="term" value="F:phospholipid binding"/>
    <property type="evidence" value="ECO:0007669"/>
    <property type="project" value="TreeGrafter"/>
</dbReference>
<dbReference type="GO" id="GO:0055090">
    <property type="term" value="P:acylglycerol homeostasis"/>
    <property type="evidence" value="ECO:0007669"/>
    <property type="project" value="TreeGrafter"/>
</dbReference>
<dbReference type="GO" id="GO:0033344">
    <property type="term" value="P:cholesterol efflux"/>
    <property type="evidence" value="ECO:0000250"/>
    <property type="project" value="UniProtKB"/>
</dbReference>
<dbReference type="GO" id="GO:0008203">
    <property type="term" value="P:cholesterol metabolic process"/>
    <property type="evidence" value="ECO:0007669"/>
    <property type="project" value="TreeGrafter"/>
</dbReference>
<dbReference type="GO" id="GO:0034382">
    <property type="term" value="P:chylomicron remnant clearance"/>
    <property type="evidence" value="ECO:0000250"/>
    <property type="project" value="UniProtKB"/>
</dbReference>
<dbReference type="GO" id="GO:0034380">
    <property type="term" value="P:high-density lipoprotein particle assembly"/>
    <property type="evidence" value="ECO:0000250"/>
    <property type="project" value="UniProtKB"/>
</dbReference>
<dbReference type="GO" id="GO:0071831">
    <property type="term" value="P:intermediate-density lipoprotein particle clearance"/>
    <property type="evidence" value="ECO:0000250"/>
    <property type="project" value="UniProtKB"/>
</dbReference>
<dbReference type="GO" id="GO:0042158">
    <property type="term" value="P:lipoprotein biosynthetic process"/>
    <property type="evidence" value="ECO:0000250"/>
    <property type="project" value="UniProtKB"/>
</dbReference>
<dbReference type="GO" id="GO:0032438">
    <property type="term" value="P:melanosome organization"/>
    <property type="evidence" value="ECO:0000250"/>
    <property type="project" value="UniProtKB"/>
</dbReference>
<dbReference type="GO" id="GO:1905907">
    <property type="term" value="P:negative regulation of amyloid fibril formation"/>
    <property type="evidence" value="ECO:0000250"/>
    <property type="project" value="UniProtKB"/>
</dbReference>
<dbReference type="GO" id="GO:0031175">
    <property type="term" value="P:neuron projection development"/>
    <property type="evidence" value="ECO:0000250"/>
    <property type="project" value="UniProtKB"/>
</dbReference>
<dbReference type="GO" id="GO:0033700">
    <property type="term" value="P:phospholipid efflux"/>
    <property type="evidence" value="ECO:0007669"/>
    <property type="project" value="TreeGrafter"/>
</dbReference>
<dbReference type="GO" id="GO:1900223">
    <property type="term" value="P:positive regulation of amyloid-beta clearance"/>
    <property type="evidence" value="ECO:0000250"/>
    <property type="project" value="UniProtKB"/>
</dbReference>
<dbReference type="GO" id="GO:0071830">
    <property type="term" value="P:triglyceride-rich lipoprotein particle clearance"/>
    <property type="evidence" value="ECO:0000250"/>
    <property type="project" value="UniProtKB"/>
</dbReference>
<dbReference type="GO" id="GO:0034447">
    <property type="term" value="P:very-low-density lipoprotein particle clearance"/>
    <property type="evidence" value="ECO:0000250"/>
    <property type="project" value="UniProtKB"/>
</dbReference>
<dbReference type="FunFam" id="1.20.120.20:FF:000002">
    <property type="entry name" value="Apolipoprotein E"/>
    <property type="match status" value="1"/>
</dbReference>
<dbReference type="FunFam" id="1.20.120.20:FF:000003">
    <property type="entry name" value="Apolipoprotein E"/>
    <property type="match status" value="1"/>
</dbReference>
<dbReference type="Gene3D" id="1.20.120.20">
    <property type="entry name" value="Apolipoprotein"/>
    <property type="match status" value="2"/>
</dbReference>
<dbReference type="InterPro" id="IPR000074">
    <property type="entry name" value="ApoA_E"/>
</dbReference>
<dbReference type="InterPro" id="IPR050163">
    <property type="entry name" value="Apolipoprotein_A1/A4/E"/>
</dbReference>
<dbReference type="PANTHER" id="PTHR18976">
    <property type="entry name" value="APOLIPOPROTEIN"/>
    <property type="match status" value="1"/>
</dbReference>
<dbReference type="PANTHER" id="PTHR18976:SF2">
    <property type="entry name" value="APOLIPOPROTEIN E"/>
    <property type="match status" value="1"/>
</dbReference>
<dbReference type="Pfam" id="PF01442">
    <property type="entry name" value="Apolipoprotein"/>
    <property type="match status" value="1"/>
</dbReference>
<dbReference type="SUPFAM" id="SSF58113">
    <property type="entry name" value="Apolipoprotein A-I"/>
    <property type="match status" value="1"/>
</dbReference>
<organism>
    <name type="scientific">Plecturocebus moloch</name>
    <name type="common">Dusky titi monkey</name>
    <name type="synonym">Callicebus moloch</name>
    <dbReference type="NCBI Taxonomy" id="9523"/>
    <lineage>
        <taxon>Eukaryota</taxon>
        <taxon>Metazoa</taxon>
        <taxon>Chordata</taxon>
        <taxon>Craniata</taxon>
        <taxon>Vertebrata</taxon>
        <taxon>Euteleostomi</taxon>
        <taxon>Mammalia</taxon>
        <taxon>Eutheria</taxon>
        <taxon>Euarchontoglires</taxon>
        <taxon>Primates</taxon>
        <taxon>Haplorrhini</taxon>
        <taxon>Platyrrhini</taxon>
        <taxon>Pitheciidae</taxon>
        <taxon>Callicebinae</taxon>
        <taxon>Plecturocebus</taxon>
    </lineage>
</organism>
<proteinExistence type="inferred from homology"/>
<feature type="signal peptide" evidence="3">
    <location>
        <begin position="1"/>
        <end position="18"/>
    </location>
</feature>
<feature type="chain" id="PRO_0000420994" description="Apolipoprotein E">
    <location>
        <begin position="19"/>
        <end position="320"/>
    </location>
</feature>
<feature type="repeat" description="1">
    <location>
        <begin position="82"/>
        <end position="103"/>
    </location>
</feature>
<feature type="repeat" description="2">
    <location>
        <begin position="104"/>
        <end position="125"/>
    </location>
</feature>
<feature type="repeat" description="3">
    <location>
        <begin position="126"/>
        <end position="147"/>
    </location>
</feature>
<feature type="repeat" description="4">
    <location>
        <begin position="148"/>
        <end position="169"/>
    </location>
</feature>
<feature type="repeat" description="5">
    <location>
        <begin position="170"/>
        <end position="191"/>
    </location>
</feature>
<feature type="repeat" description="6">
    <location>
        <begin position="192"/>
        <end position="213"/>
    </location>
</feature>
<feature type="repeat" description="7">
    <location>
        <begin position="214"/>
        <end position="236"/>
    </location>
</feature>
<feature type="repeat" description="8">
    <location>
        <begin position="237"/>
        <end position="258"/>
    </location>
</feature>
<feature type="region of interest" description="8 X 22 AA approximate tandem repeats">
    <location>
        <begin position="82"/>
        <end position="258"/>
    </location>
</feature>
<feature type="region of interest" description="LDL and other lipoprotein receptors binding" evidence="1">
    <location>
        <begin position="160"/>
        <end position="170"/>
    </location>
</feature>
<feature type="region of interest" description="Lipid-binding and lipoprotein association" evidence="1">
    <location>
        <begin position="212"/>
        <end position="293"/>
    </location>
</feature>
<feature type="region of interest" description="Homooligomerization" evidence="1">
    <location>
        <begin position="269"/>
        <end position="320"/>
    </location>
</feature>
<feature type="region of interest" description="Specificity for association with VLDL" evidence="1">
    <location>
        <begin position="281"/>
        <end position="293"/>
    </location>
</feature>
<feature type="binding site" evidence="1">
    <location>
        <begin position="164"/>
        <end position="167"/>
    </location>
    <ligand>
        <name>heparin</name>
        <dbReference type="ChEBI" id="CHEBI:28304"/>
    </ligand>
</feature>
<feature type="binding site" evidence="1">
    <location>
        <begin position="232"/>
        <end position="239"/>
    </location>
    <ligand>
        <name>heparin</name>
        <dbReference type="ChEBI" id="CHEBI:28304"/>
    </ligand>
</feature>
<feature type="modified residue" description="Methionine sulfoxide" evidence="2">
    <location>
        <position position="145"/>
    </location>
</feature>
<feature type="modified residue" description="Phosphoserine" evidence="1">
    <location>
        <position position="149"/>
    </location>
</feature>
<reference key="1">
    <citation type="submission" date="2006-07" db="EMBL/GenBank/DDBJ databases">
        <authorList>
            <person name="Cheng J.-F."/>
            <person name="Hamilton M."/>
            <person name="Peng Y."/>
            <person name="Hosseini R."/>
            <person name="Peng Z."/>
            <person name="Malinov I."/>
            <person name="Rubin E.M."/>
        </authorList>
    </citation>
    <scope>NUCLEOTIDE SEQUENCE [LARGE SCALE GENOMIC DNA]</scope>
</reference>
<reference key="2">
    <citation type="unpublished observations" date="2012-11">
        <authorList>
            <person name="Puppione D.L."/>
        </authorList>
    </citation>
    <scope>IDENTIFICATION</scope>
</reference>
<gene>
    <name type="primary">APOE</name>
</gene>
<name>APOE_PLEMO</name>
<sequence>MKVLWAALLVAFLAGCQGKVEQVVEPELEPEPELHQQADWQSGQPWELALGRFWDYLRWVQTLSEQVQEELLSSQVTQELTALMDETMKELKAYKSELEEQLSPVAEETRARLSKELQAAQARLGADMEDVRSRLAQYRSEVQAMLGQSTEELRARLASHLRKLRKRLLRDVDDLQKRLAVYQAGAREGAERGVSAIRERLGPLVEQGRARAATVGSSLAGQPLQERAQAWGERLRARMEEVGSRTRDRLDEVKEQVEEVRAKLEEQAQQMRLQAEAFQARLKSWFEPLVEDMQRQWAGLVEKVQAAVGASAAPVPSDNH</sequence>